<organism>
    <name type="scientific">Streptococcus pyogenes serotype M1</name>
    <dbReference type="NCBI Taxonomy" id="301447"/>
    <lineage>
        <taxon>Bacteria</taxon>
        <taxon>Bacillati</taxon>
        <taxon>Bacillota</taxon>
        <taxon>Bacilli</taxon>
        <taxon>Lactobacillales</taxon>
        <taxon>Streptococcaceae</taxon>
        <taxon>Streptococcus</taxon>
    </lineage>
</organism>
<protein>
    <recommendedName>
        <fullName>DNA-directed RNA polymerase subunit omega</fullName>
        <shortName>RNAP omega subunit</shortName>
        <ecNumber>2.7.7.6</ecNumber>
    </recommendedName>
    <alternativeName>
        <fullName>RNA polymerase omega subunit</fullName>
    </alternativeName>
    <alternativeName>
        <fullName>Transcriptase subunit omega</fullName>
    </alternativeName>
</protein>
<keyword id="KW-0240">DNA-directed RNA polymerase</keyword>
<keyword id="KW-0548">Nucleotidyltransferase</keyword>
<keyword id="KW-1185">Reference proteome</keyword>
<keyword id="KW-0804">Transcription</keyword>
<keyword id="KW-0808">Transferase</keyword>
<sequence length="104" mass="11705">MLKPSIDTLLDKVPSKYSLVILQAKRAHELEAGATPTQEFKSVKSTLQALEEIESGNVVIHPDPSAKREAVRAKIEAERLAKEEEERKIKEQIAKEKEEEGEKI</sequence>
<dbReference type="EC" id="2.7.7.6"/>
<dbReference type="EMBL" id="AE004092">
    <property type="protein sequence ID" value="AAK34401.1"/>
    <property type="molecule type" value="Genomic_DNA"/>
</dbReference>
<dbReference type="EMBL" id="CP000017">
    <property type="protein sequence ID" value="AAZ51958.1"/>
    <property type="status" value="ALT_INIT"/>
    <property type="molecule type" value="Genomic_DNA"/>
</dbReference>
<dbReference type="RefSeq" id="NP_269680.1">
    <property type="nucleotide sequence ID" value="NC_002737.2"/>
</dbReference>
<dbReference type="SMR" id="P68840"/>
<dbReference type="PaxDb" id="1314-HKU360_01388"/>
<dbReference type="KEGG" id="spy:SPy_1630"/>
<dbReference type="KEGG" id="spz:M5005_Spy1340"/>
<dbReference type="PATRIC" id="fig|160490.10.peg.1422"/>
<dbReference type="HOGENOM" id="CLU_125406_0_0_9"/>
<dbReference type="OMA" id="AHEIDKY"/>
<dbReference type="Proteomes" id="UP000000750">
    <property type="component" value="Chromosome"/>
</dbReference>
<dbReference type="GO" id="GO:0000428">
    <property type="term" value="C:DNA-directed RNA polymerase complex"/>
    <property type="evidence" value="ECO:0007669"/>
    <property type="project" value="UniProtKB-KW"/>
</dbReference>
<dbReference type="GO" id="GO:0003677">
    <property type="term" value="F:DNA binding"/>
    <property type="evidence" value="ECO:0007669"/>
    <property type="project" value="UniProtKB-UniRule"/>
</dbReference>
<dbReference type="GO" id="GO:0003899">
    <property type="term" value="F:DNA-directed RNA polymerase activity"/>
    <property type="evidence" value="ECO:0007669"/>
    <property type="project" value="UniProtKB-UniRule"/>
</dbReference>
<dbReference type="GO" id="GO:0006351">
    <property type="term" value="P:DNA-templated transcription"/>
    <property type="evidence" value="ECO:0007669"/>
    <property type="project" value="UniProtKB-UniRule"/>
</dbReference>
<dbReference type="Gene3D" id="3.90.940.10">
    <property type="match status" value="1"/>
</dbReference>
<dbReference type="HAMAP" id="MF_00366">
    <property type="entry name" value="RNApol_bact_RpoZ"/>
    <property type="match status" value="1"/>
</dbReference>
<dbReference type="InterPro" id="IPR003716">
    <property type="entry name" value="DNA-dir_RNA_pol_omega"/>
</dbReference>
<dbReference type="InterPro" id="IPR006110">
    <property type="entry name" value="Pol_omega/Rpo6/RPB6"/>
</dbReference>
<dbReference type="InterPro" id="IPR036161">
    <property type="entry name" value="RPB6/omega-like_sf"/>
</dbReference>
<dbReference type="NCBIfam" id="TIGR00690">
    <property type="entry name" value="rpoZ"/>
    <property type="match status" value="1"/>
</dbReference>
<dbReference type="PANTHER" id="PTHR34476">
    <property type="entry name" value="DNA-DIRECTED RNA POLYMERASE SUBUNIT OMEGA"/>
    <property type="match status" value="1"/>
</dbReference>
<dbReference type="PANTHER" id="PTHR34476:SF1">
    <property type="entry name" value="DNA-DIRECTED RNA POLYMERASE SUBUNIT OMEGA"/>
    <property type="match status" value="1"/>
</dbReference>
<dbReference type="Pfam" id="PF01192">
    <property type="entry name" value="RNA_pol_Rpb6"/>
    <property type="match status" value="1"/>
</dbReference>
<dbReference type="SMART" id="SM01409">
    <property type="entry name" value="RNA_pol_Rpb6"/>
    <property type="match status" value="1"/>
</dbReference>
<dbReference type="SUPFAM" id="SSF63562">
    <property type="entry name" value="RPB6/omega subunit-like"/>
    <property type="match status" value="1"/>
</dbReference>
<proteinExistence type="inferred from homology"/>
<feature type="chain" id="PRO_0000128995" description="DNA-directed RNA polymerase subunit omega">
    <location>
        <begin position="1"/>
        <end position="104"/>
    </location>
</feature>
<reference key="1">
    <citation type="journal article" date="2001" name="Proc. Natl. Acad. Sci. U.S.A.">
        <title>Complete genome sequence of an M1 strain of Streptococcus pyogenes.</title>
        <authorList>
            <person name="Ferretti J.J."/>
            <person name="McShan W.M."/>
            <person name="Ajdic D.J."/>
            <person name="Savic D.J."/>
            <person name="Savic G."/>
            <person name="Lyon K."/>
            <person name="Primeaux C."/>
            <person name="Sezate S."/>
            <person name="Suvorov A.N."/>
            <person name="Kenton S."/>
            <person name="Lai H.S."/>
            <person name="Lin S.P."/>
            <person name="Qian Y."/>
            <person name="Jia H.G."/>
            <person name="Najar F.Z."/>
            <person name="Ren Q."/>
            <person name="Zhu H."/>
            <person name="Song L."/>
            <person name="White J."/>
            <person name="Yuan X."/>
            <person name="Clifton S.W."/>
            <person name="Roe B.A."/>
            <person name="McLaughlin R.E."/>
        </authorList>
    </citation>
    <scope>NUCLEOTIDE SEQUENCE [LARGE SCALE GENOMIC DNA]</scope>
    <source>
        <strain>ATCC 700294 / SF370 / Serotype M1</strain>
    </source>
</reference>
<reference key="2">
    <citation type="journal article" date="2005" name="J. Infect. Dis.">
        <title>Evolutionary origin and emergence of a highly successful clone of serotype M1 group A Streptococcus involved multiple horizontal gene transfer events.</title>
        <authorList>
            <person name="Sumby P."/>
            <person name="Porcella S.F."/>
            <person name="Madrigal A.G."/>
            <person name="Barbian K.D."/>
            <person name="Virtaneva K."/>
            <person name="Ricklefs S.M."/>
            <person name="Sturdevant D.E."/>
            <person name="Graham M.R."/>
            <person name="Vuopio-Varkila J."/>
            <person name="Hoe N.P."/>
            <person name="Musser J.M."/>
        </authorList>
    </citation>
    <scope>NUCLEOTIDE SEQUENCE [LARGE SCALE GENOMIC DNA]</scope>
    <source>
        <strain>ATCC BAA-947 / MGAS5005 / Serotype M1</strain>
    </source>
</reference>
<comment type="function">
    <text evidence="1">Promotes RNA polymerase assembly. Latches the N- and C-terminal regions of the beta' subunit thereby facilitating its interaction with the beta and alpha subunits (By similarity).</text>
</comment>
<comment type="catalytic activity">
    <reaction>
        <text>RNA(n) + a ribonucleoside 5'-triphosphate = RNA(n+1) + diphosphate</text>
        <dbReference type="Rhea" id="RHEA:21248"/>
        <dbReference type="Rhea" id="RHEA-COMP:14527"/>
        <dbReference type="Rhea" id="RHEA-COMP:17342"/>
        <dbReference type="ChEBI" id="CHEBI:33019"/>
        <dbReference type="ChEBI" id="CHEBI:61557"/>
        <dbReference type="ChEBI" id="CHEBI:140395"/>
        <dbReference type="EC" id="2.7.7.6"/>
    </reaction>
</comment>
<comment type="subunit">
    <text evidence="1">The RNAP catalytic core consists of 2 alpha, 1 beta, 1 beta' and 1 omega subunit. When a sigma factor is associated with the core the holoenzyme is formed, which can initiate transcription (By similarity).</text>
</comment>
<comment type="similarity">
    <text evidence="2">Belongs to the RNA polymerase subunit omega family.</text>
</comment>
<comment type="sequence caution" evidence="2">
    <conflict type="erroneous initiation">
        <sequence resource="EMBL-CDS" id="AAZ51958"/>
    </conflict>
</comment>
<name>RPOZ_STRP1</name>
<evidence type="ECO:0000250" key="1"/>
<evidence type="ECO:0000305" key="2"/>
<gene>
    <name type="primary">rpoZ</name>
    <name type="ordered locus">SPy_1630</name>
    <name type="ordered locus">M5005_Spy1340</name>
</gene>
<accession>P68840</accession>
<accession>P82577</accession>
<accession>Q48XG7</accession>